<sequence>MIHAGNAITVQMLADGIAEFRFDLQGESVNKFNRATIEDFKAAIAAVKANNDIKGLVVTSGKSTFIVGADITEFGQNFAQGEKAIVDWLMPVHEIFNSFEDLDLPKVAAINGMALGGGFEMCLVCDYRVMSEAAQVGLPEIKLGIYPGFGGSVRLSRLIGIDNAVEWMAMATPKKPAAALKDGAVDAVVAADKLLDAATDLVKQAISGRLNWKAKRQEKLEAVKLNPLEQMMAFNTAKGAVLAKANPAQYPAPKLLLDSLQAGASLARDEALKAEAEGFAKAAVTPQAEALIGLFINDQVVKKASKQHEKGAHPVNQAAVLGAGIMGGGIAYQAASKGTPIIMKDIGNPQLALGMKEANNLLTKQVERKKMKPAQMGETLARIRPTLSYEEFKEVDIVIEAVTENPKVKEIVLAETEKNVRENTIIASNTSTISITRLAKALQRPENFVGMHFFNPVHMMPLVEVIRGEKTSEEAIATTVVLAQKMGKTPIVVNDCPGFLVNRVLFPYFGAFDLLVKDGADFQQIDNVMSKFGWPMGPAYLIDVVGIDTGVHGAEVMAEGFPDRMKPDYKGAIEAMYEAKRLGQKNDVGFYKYELDKKGKKAKTVDPTAYEVIAPFVTGEKREFDNQEIIDRMMLALCNETVRCLEDNIVATASEADMAMIMGIGFPPFRGGPCRYIDQTGVAEYVALCDKYAHLGKAYEAPQMLRDMAANNKKFYG</sequence>
<feature type="chain" id="PRO_1000186028" description="Fatty acid oxidation complex subunit alpha">
    <location>
        <begin position="1"/>
        <end position="717"/>
    </location>
</feature>
<feature type="region of interest" description="Enoyl-CoA hydratase/isomerase" evidence="1">
    <location>
        <begin position="1"/>
        <end position="190"/>
    </location>
</feature>
<feature type="region of interest" description="3-hydroxyacyl-CoA dehydrogenase" evidence="1">
    <location>
        <begin position="313"/>
        <end position="717"/>
    </location>
</feature>
<feature type="active site" description="For 3-hydroxyacyl-CoA dehydrogenase activity" evidence="1">
    <location>
        <position position="452"/>
    </location>
</feature>
<feature type="binding site" evidence="1">
    <location>
        <position position="298"/>
    </location>
    <ligand>
        <name>substrate</name>
    </ligand>
</feature>
<feature type="binding site" evidence="1">
    <location>
        <position position="326"/>
    </location>
    <ligand>
        <name>NAD(+)</name>
        <dbReference type="ChEBI" id="CHEBI:57540"/>
    </ligand>
</feature>
<feature type="binding site" evidence="1">
    <location>
        <position position="345"/>
    </location>
    <ligand>
        <name>NAD(+)</name>
        <dbReference type="ChEBI" id="CHEBI:57540"/>
    </ligand>
</feature>
<feature type="binding site" evidence="1">
    <location>
        <begin position="402"/>
        <end position="404"/>
    </location>
    <ligand>
        <name>NAD(+)</name>
        <dbReference type="ChEBI" id="CHEBI:57540"/>
    </ligand>
</feature>
<feature type="binding site" evidence="1">
    <location>
        <position position="409"/>
    </location>
    <ligand>
        <name>NAD(+)</name>
        <dbReference type="ChEBI" id="CHEBI:57540"/>
    </ligand>
</feature>
<feature type="binding site" evidence="1">
    <location>
        <position position="431"/>
    </location>
    <ligand>
        <name>NAD(+)</name>
        <dbReference type="ChEBI" id="CHEBI:57540"/>
    </ligand>
</feature>
<feature type="binding site" evidence="1">
    <location>
        <position position="455"/>
    </location>
    <ligand>
        <name>NAD(+)</name>
        <dbReference type="ChEBI" id="CHEBI:57540"/>
    </ligand>
</feature>
<feature type="binding site" evidence="1">
    <location>
        <position position="502"/>
    </location>
    <ligand>
        <name>substrate</name>
    </ligand>
</feature>
<feature type="site" description="Important for catalytic activity" evidence="1">
    <location>
        <position position="120"/>
    </location>
</feature>
<feature type="site" description="Important for catalytic activity" evidence="1">
    <location>
        <position position="140"/>
    </location>
</feature>
<gene>
    <name evidence="1" type="primary">fadB</name>
    <name type="ordered locus">ACICU_00322</name>
</gene>
<proteinExistence type="inferred from homology"/>
<name>FADB_ACIBC</name>
<dbReference type="EC" id="4.2.1.17" evidence="1"/>
<dbReference type="EC" id="5.1.2.3" evidence="1"/>
<dbReference type="EC" id="5.3.3.8" evidence="1"/>
<dbReference type="EC" id="1.1.1.35" evidence="1"/>
<dbReference type="EMBL" id="CP000863">
    <property type="protein sequence ID" value="ACC55634.1"/>
    <property type="molecule type" value="Genomic_DNA"/>
</dbReference>
<dbReference type="RefSeq" id="WP_000580938.1">
    <property type="nucleotide sequence ID" value="NZ_CP031380.1"/>
</dbReference>
<dbReference type="SMR" id="B2I2J9"/>
<dbReference type="GeneID" id="92892302"/>
<dbReference type="KEGG" id="abc:ACICU_00322"/>
<dbReference type="HOGENOM" id="CLU_009834_16_3_6"/>
<dbReference type="UniPathway" id="UPA00659"/>
<dbReference type="Proteomes" id="UP000008839">
    <property type="component" value="Chromosome"/>
</dbReference>
<dbReference type="GO" id="GO:0036125">
    <property type="term" value="C:fatty acid beta-oxidation multienzyme complex"/>
    <property type="evidence" value="ECO:0007669"/>
    <property type="project" value="InterPro"/>
</dbReference>
<dbReference type="GO" id="GO:0008692">
    <property type="term" value="F:3-hydroxybutyryl-CoA epimerase activity"/>
    <property type="evidence" value="ECO:0007669"/>
    <property type="project" value="UniProtKB-UniRule"/>
</dbReference>
<dbReference type="GO" id="GO:0004165">
    <property type="term" value="F:delta(3)-delta(2)-enoyl-CoA isomerase activity"/>
    <property type="evidence" value="ECO:0007669"/>
    <property type="project" value="UniProtKB-UniRule"/>
</dbReference>
<dbReference type="GO" id="GO:0004300">
    <property type="term" value="F:enoyl-CoA hydratase activity"/>
    <property type="evidence" value="ECO:0007669"/>
    <property type="project" value="UniProtKB-UniRule"/>
</dbReference>
<dbReference type="GO" id="GO:0016509">
    <property type="term" value="F:long-chain-3-hydroxyacyl-CoA dehydrogenase activity"/>
    <property type="evidence" value="ECO:0007669"/>
    <property type="project" value="TreeGrafter"/>
</dbReference>
<dbReference type="GO" id="GO:0070403">
    <property type="term" value="F:NAD+ binding"/>
    <property type="evidence" value="ECO:0007669"/>
    <property type="project" value="InterPro"/>
</dbReference>
<dbReference type="GO" id="GO:0006635">
    <property type="term" value="P:fatty acid beta-oxidation"/>
    <property type="evidence" value="ECO:0007669"/>
    <property type="project" value="UniProtKB-UniRule"/>
</dbReference>
<dbReference type="CDD" id="cd06558">
    <property type="entry name" value="crotonase-like"/>
    <property type="match status" value="1"/>
</dbReference>
<dbReference type="FunFam" id="3.40.50.720:FF:000009">
    <property type="entry name" value="Fatty oxidation complex, alpha subunit"/>
    <property type="match status" value="1"/>
</dbReference>
<dbReference type="Gene3D" id="1.10.1040.50">
    <property type="match status" value="1"/>
</dbReference>
<dbReference type="Gene3D" id="3.90.226.10">
    <property type="entry name" value="2-enoyl-CoA Hydratase, Chain A, domain 1"/>
    <property type="match status" value="1"/>
</dbReference>
<dbReference type="Gene3D" id="3.40.50.720">
    <property type="entry name" value="NAD(P)-binding Rossmann-like Domain"/>
    <property type="match status" value="1"/>
</dbReference>
<dbReference type="HAMAP" id="MF_01621">
    <property type="entry name" value="FadB"/>
    <property type="match status" value="1"/>
</dbReference>
<dbReference type="InterPro" id="IPR006180">
    <property type="entry name" value="3-OHacyl-CoA_DH_CS"/>
</dbReference>
<dbReference type="InterPro" id="IPR006176">
    <property type="entry name" value="3-OHacyl-CoA_DH_NAD-bd"/>
</dbReference>
<dbReference type="InterPro" id="IPR006108">
    <property type="entry name" value="3HC_DH_C"/>
</dbReference>
<dbReference type="InterPro" id="IPR008927">
    <property type="entry name" value="6-PGluconate_DH-like_C_sf"/>
</dbReference>
<dbReference type="InterPro" id="IPR029045">
    <property type="entry name" value="ClpP/crotonase-like_dom_sf"/>
</dbReference>
<dbReference type="InterPro" id="IPR018376">
    <property type="entry name" value="Enoyl-CoA_hyd/isom_CS"/>
</dbReference>
<dbReference type="InterPro" id="IPR001753">
    <property type="entry name" value="Enoyl-CoA_hydra/iso"/>
</dbReference>
<dbReference type="InterPro" id="IPR050136">
    <property type="entry name" value="FA_oxidation_alpha_subunit"/>
</dbReference>
<dbReference type="InterPro" id="IPR012799">
    <property type="entry name" value="FadB"/>
</dbReference>
<dbReference type="InterPro" id="IPR036291">
    <property type="entry name" value="NAD(P)-bd_dom_sf"/>
</dbReference>
<dbReference type="NCBIfam" id="TIGR02437">
    <property type="entry name" value="FadB"/>
    <property type="match status" value="1"/>
</dbReference>
<dbReference type="NCBIfam" id="NF008727">
    <property type="entry name" value="PRK11730.1"/>
    <property type="match status" value="1"/>
</dbReference>
<dbReference type="PANTHER" id="PTHR43612">
    <property type="entry name" value="TRIFUNCTIONAL ENZYME SUBUNIT ALPHA"/>
    <property type="match status" value="1"/>
</dbReference>
<dbReference type="PANTHER" id="PTHR43612:SF3">
    <property type="entry name" value="TRIFUNCTIONAL ENZYME SUBUNIT ALPHA, MITOCHONDRIAL"/>
    <property type="match status" value="1"/>
</dbReference>
<dbReference type="Pfam" id="PF00725">
    <property type="entry name" value="3HCDH"/>
    <property type="match status" value="1"/>
</dbReference>
<dbReference type="Pfam" id="PF02737">
    <property type="entry name" value="3HCDH_N"/>
    <property type="match status" value="1"/>
</dbReference>
<dbReference type="Pfam" id="PF00378">
    <property type="entry name" value="ECH_1"/>
    <property type="match status" value="1"/>
</dbReference>
<dbReference type="SUPFAM" id="SSF48179">
    <property type="entry name" value="6-phosphogluconate dehydrogenase C-terminal domain-like"/>
    <property type="match status" value="2"/>
</dbReference>
<dbReference type="SUPFAM" id="SSF52096">
    <property type="entry name" value="ClpP/crotonase"/>
    <property type="match status" value="1"/>
</dbReference>
<dbReference type="SUPFAM" id="SSF51735">
    <property type="entry name" value="NAD(P)-binding Rossmann-fold domains"/>
    <property type="match status" value="1"/>
</dbReference>
<dbReference type="PROSITE" id="PS00067">
    <property type="entry name" value="3HCDH"/>
    <property type="match status" value="1"/>
</dbReference>
<dbReference type="PROSITE" id="PS00166">
    <property type="entry name" value="ENOYL_COA_HYDRATASE"/>
    <property type="match status" value="1"/>
</dbReference>
<evidence type="ECO:0000255" key="1">
    <source>
        <dbReference type="HAMAP-Rule" id="MF_01621"/>
    </source>
</evidence>
<accession>B2I2J9</accession>
<organism>
    <name type="scientific">Acinetobacter baumannii (strain ACICU)</name>
    <dbReference type="NCBI Taxonomy" id="405416"/>
    <lineage>
        <taxon>Bacteria</taxon>
        <taxon>Pseudomonadati</taxon>
        <taxon>Pseudomonadota</taxon>
        <taxon>Gammaproteobacteria</taxon>
        <taxon>Moraxellales</taxon>
        <taxon>Moraxellaceae</taxon>
        <taxon>Acinetobacter</taxon>
        <taxon>Acinetobacter calcoaceticus/baumannii complex</taxon>
    </lineage>
</organism>
<comment type="function">
    <text evidence="1">Involved in the aerobic and anaerobic degradation of long-chain fatty acids via beta-oxidation cycle. Catalyzes the formation of 3-oxoacyl-CoA from enoyl-CoA via L-3-hydroxyacyl-CoA. It can also use D-3-hydroxyacyl-CoA and cis-3-enoyl-CoA as substrate.</text>
</comment>
<comment type="catalytic activity">
    <reaction evidence="1">
        <text>a (3S)-3-hydroxyacyl-CoA + NAD(+) = a 3-oxoacyl-CoA + NADH + H(+)</text>
        <dbReference type="Rhea" id="RHEA:22432"/>
        <dbReference type="ChEBI" id="CHEBI:15378"/>
        <dbReference type="ChEBI" id="CHEBI:57318"/>
        <dbReference type="ChEBI" id="CHEBI:57540"/>
        <dbReference type="ChEBI" id="CHEBI:57945"/>
        <dbReference type="ChEBI" id="CHEBI:90726"/>
        <dbReference type="EC" id="1.1.1.35"/>
    </reaction>
</comment>
<comment type="catalytic activity">
    <reaction evidence="1">
        <text>a (3S)-3-hydroxyacyl-CoA = a (2E)-enoyl-CoA + H2O</text>
        <dbReference type="Rhea" id="RHEA:16105"/>
        <dbReference type="ChEBI" id="CHEBI:15377"/>
        <dbReference type="ChEBI" id="CHEBI:57318"/>
        <dbReference type="ChEBI" id="CHEBI:58856"/>
        <dbReference type="EC" id="4.2.1.17"/>
    </reaction>
</comment>
<comment type="catalytic activity">
    <reaction evidence="1">
        <text>a 4-saturated-(3S)-3-hydroxyacyl-CoA = a (3E)-enoyl-CoA + H2O</text>
        <dbReference type="Rhea" id="RHEA:20724"/>
        <dbReference type="ChEBI" id="CHEBI:15377"/>
        <dbReference type="ChEBI" id="CHEBI:58521"/>
        <dbReference type="ChEBI" id="CHEBI:137480"/>
        <dbReference type="EC" id="4.2.1.17"/>
    </reaction>
</comment>
<comment type="catalytic activity">
    <reaction evidence="1">
        <text>(3S)-3-hydroxybutanoyl-CoA = (3R)-3-hydroxybutanoyl-CoA</text>
        <dbReference type="Rhea" id="RHEA:21760"/>
        <dbReference type="ChEBI" id="CHEBI:57315"/>
        <dbReference type="ChEBI" id="CHEBI:57316"/>
        <dbReference type="EC" id="5.1.2.3"/>
    </reaction>
</comment>
<comment type="catalytic activity">
    <reaction evidence="1">
        <text>a (3Z)-enoyl-CoA = a 4-saturated (2E)-enoyl-CoA</text>
        <dbReference type="Rhea" id="RHEA:45900"/>
        <dbReference type="ChEBI" id="CHEBI:85097"/>
        <dbReference type="ChEBI" id="CHEBI:85489"/>
        <dbReference type="EC" id="5.3.3.8"/>
    </reaction>
</comment>
<comment type="catalytic activity">
    <reaction evidence="1">
        <text>a (3E)-enoyl-CoA = a 4-saturated (2E)-enoyl-CoA</text>
        <dbReference type="Rhea" id="RHEA:45228"/>
        <dbReference type="ChEBI" id="CHEBI:58521"/>
        <dbReference type="ChEBI" id="CHEBI:85097"/>
        <dbReference type="EC" id="5.3.3.8"/>
    </reaction>
</comment>
<comment type="pathway">
    <text evidence="1">Lipid metabolism; fatty acid beta-oxidation.</text>
</comment>
<comment type="subunit">
    <text evidence="1">Heterotetramer of two alpha chains (FadB) and two beta chains (FadA).</text>
</comment>
<comment type="similarity">
    <text evidence="1">In the N-terminal section; belongs to the enoyl-CoA hydratase/isomerase family.</text>
</comment>
<comment type="similarity">
    <text evidence="1">In the C-terminal section; belongs to the 3-hydroxyacyl-CoA dehydrogenase family.</text>
</comment>
<keyword id="KW-0276">Fatty acid metabolism</keyword>
<keyword id="KW-0413">Isomerase</keyword>
<keyword id="KW-0442">Lipid degradation</keyword>
<keyword id="KW-0443">Lipid metabolism</keyword>
<keyword id="KW-0456">Lyase</keyword>
<keyword id="KW-0511">Multifunctional enzyme</keyword>
<keyword id="KW-0520">NAD</keyword>
<keyword id="KW-0560">Oxidoreductase</keyword>
<protein>
    <recommendedName>
        <fullName evidence="1">Fatty acid oxidation complex subunit alpha</fullName>
    </recommendedName>
    <domain>
        <recommendedName>
            <fullName evidence="1">Enoyl-CoA hydratase/Delta(3)-cis-Delta(2)-trans-enoyl-CoA isomerase/3-hydroxybutyryl-CoA epimerase</fullName>
            <ecNumber evidence="1">4.2.1.17</ecNumber>
            <ecNumber evidence="1">5.1.2.3</ecNumber>
            <ecNumber evidence="1">5.3.3.8</ecNumber>
        </recommendedName>
    </domain>
    <domain>
        <recommendedName>
            <fullName evidence="1">3-hydroxyacyl-CoA dehydrogenase</fullName>
            <ecNumber evidence="1">1.1.1.35</ecNumber>
        </recommendedName>
    </domain>
</protein>
<reference key="1">
    <citation type="journal article" date="2008" name="Antimicrob. Agents Chemother.">
        <title>Whole-genome pyrosequencing of an epidemic multidrug-resistant Acinetobacter baumannii strain belonging to the European clone II group.</title>
        <authorList>
            <person name="Iacono M."/>
            <person name="Villa L."/>
            <person name="Fortini D."/>
            <person name="Bordoni R."/>
            <person name="Imperi F."/>
            <person name="Bonnal R.J."/>
            <person name="Sicheritz-Ponten T."/>
            <person name="De Bellis G."/>
            <person name="Visca P."/>
            <person name="Cassone A."/>
            <person name="Carattoli A."/>
        </authorList>
    </citation>
    <scope>NUCLEOTIDE SEQUENCE [LARGE SCALE GENOMIC DNA]</scope>
    <source>
        <strain>ACICU</strain>
    </source>
</reference>